<gene>
    <name type="primary">acat1-a</name>
</gene>
<sequence length="420" mass="44128">MAFCGTRTAARLSHSTRALHNTHRNFASQRTLNEVVIASAARTPIGSFQGTLSSLPATKLGSIAIKAAVERAGIPADEVKEVYMGNVLQAGQGQAPSRQATLGAGLAISTPTTTINKVCASGMKSVMLAAQSLMCGHQQVMVAGGMESMSNVPYCMSRGATPYGGVKLEDLIVKDGLTDVYNKIHMGNCAENTAKKFSISREEQDSFAIHSYTRSKAAWDSGLIANEIAPVTIAQKGKPDIIVQEDEEYKRVDFSKFPKLKTVFQKDNGTVTAANSSTLNDGAAALLLMTTEAANRLNVTPLARIVAFADAAVDPIDFPIAPAYAVPKLLSEAGLKKEDIAMWEINEAFSVVVLANIKMLGIDPARVNMNGGAVSLGHPIGMSGARIVGHMAHALKKGQFGIAGICNGGGGASAVLIEKL</sequence>
<reference key="1">
    <citation type="submission" date="2004-04" db="EMBL/GenBank/DDBJ databases">
        <authorList>
            <consortium name="NIH - Xenopus Gene Collection (XGC) project"/>
        </authorList>
    </citation>
    <scope>NUCLEOTIDE SEQUENCE [LARGE SCALE MRNA]</scope>
    <source>
        <tissue>Embryo</tissue>
    </source>
</reference>
<protein>
    <recommendedName>
        <fullName>Acetyl-CoA acetyltransferase A, mitochondrial</fullName>
        <ecNumber evidence="2">2.3.1.9</ecNumber>
    </recommendedName>
    <alternativeName>
        <fullName>Acetoacetyl-CoA thiolase A</fullName>
    </alternativeName>
</protein>
<feature type="transit peptide" description="Mitochondrion" evidence="1">
    <location>
        <begin position="1"/>
        <end position="33"/>
    </location>
</feature>
<feature type="chain" id="PRO_0000356276" description="Acetyl-CoA acetyltransferase A, mitochondrial">
    <location>
        <begin position="34"/>
        <end position="420"/>
    </location>
</feature>
<feature type="active site" description="Acyl-thioester intermediate" evidence="2">
    <location>
        <position position="119"/>
    </location>
</feature>
<feature type="active site" description="Proton donor/acceptor" evidence="2">
    <location>
        <position position="406"/>
    </location>
</feature>
<feature type="binding site" evidence="2">
    <location>
        <position position="212"/>
    </location>
    <ligand>
        <name>CoA</name>
        <dbReference type="ChEBI" id="CHEBI:57287"/>
    </ligand>
</feature>
<feature type="binding site" evidence="2">
    <location>
        <position position="212"/>
    </location>
    <ligand>
        <name>K(+)</name>
        <dbReference type="ChEBI" id="CHEBI:29103"/>
    </ligand>
</feature>
<feature type="binding site" evidence="2">
    <location>
        <begin position="251"/>
        <end position="253"/>
    </location>
    <ligand>
        <name>CoA</name>
        <dbReference type="ChEBI" id="CHEBI:57287"/>
    </ligand>
</feature>
<feature type="binding site" evidence="2">
    <location>
        <position position="256"/>
    </location>
    <ligand>
        <name>CoA</name>
        <dbReference type="ChEBI" id="CHEBI:57287"/>
    </ligand>
</feature>
<feature type="binding site" evidence="2">
    <location>
        <position position="273"/>
    </location>
    <ligand>
        <name>K(+)</name>
        <dbReference type="ChEBI" id="CHEBI:29103"/>
    </ligand>
</feature>
<feature type="binding site" evidence="2">
    <location>
        <position position="274"/>
    </location>
    <ligand>
        <name>K(+)</name>
        <dbReference type="ChEBI" id="CHEBI:29103"/>
    </ligand>
</feature>
<feature type="binding site" evidence="2">
    <location>
        <position position="277"/>
    </location>
    <ligand>
        <name>CoA</name>
        <dbReference type="ChEBI" id="CHEBI:57287"/>
    </ligand>
</feature>
<feature type="binding site" evidence="2">
    <location>
        <position position="374"/>
    </location>
    <ligand>
        <name>K(+)</name>
        <dbReference type="ChEBI" id="CHEBI:29103"/>
    </ligand>
</feature>
<feature type="site" description="Increases nucleophilicity of active site Cys" evidence="2">
    <location>
        <position position="378"/>
    </location>
</feature>
<proteinExistence type="evidence at transcript level"/>
<evidence type="ECO:0000250" key="1">
    <source>
        <dbReference type="UniProtKB" id="P17764"/>
    </source>
</evidence>
<evidence type="ECO:0000250" key="2">
    <source>
        <dbReference type="UniProtKB" id="P24752"/>
    </source>
</evidence>
<evidence type="ECO:0000255" key="3">
    <source>
        <dbReference type="PROSITE-ProRule" id="PRU10020"/>
    </source>
</evidence>
<evidence type="ECO:0000305" key="4"/>
<keyword id="KW-0012">Acyltransferase</keyword>
<keyword id="KW-0276">Fatty acid metabolism</keyword>
<keyword id="KW-0443">Lipid metabolism</keyword>
<keyword id="KW-0479">Metal-binding</keyword>
<keyword id="KW-0496">Mitochondrion</keyword>
<keyword id="KW-0630">Potassium</keyword>
<keyword id="KW-1185">Reference proteome</keyword>
<keyword id="KW-0808">Transferase</keyword>
<keyword id="KW-0809">Transit peptide</keyword>
<accession>Q6NU46</accession>
<comment type="function">
    <text evidence="2">This is one of the enzymes that catalyzes the last step of the mitochondrial beta-oxidation pathway, an aerobic process breaking down fatty acids into acetyl-CoA. Using free coenzyme A/CoA, catalyzes the thiolytic cleavage of medium- to long-chain 3-oxoacyl-CoAs into acetyl-CoA and a fatty acyl-CoA shortened by two carbon atoms. The activity of the enzyme is reversible and it can also catalyze the condensation of two acetyl-CoA molecules into acetoacetyl-CoA. Thereby, it plays a major role in ketone body metabolism.</text>
</comment>
<comment type="catalytic activity">
    <reaction evidence="3">
        <text>2 acetyl-CoA = acetoacetyl-CoA + CoA</text>
        <dbReference type="Rhea" id="RHEA:21036"/>
        <dbReference type="ChEBI" id="CHEBI:57286"/>
        <dbReference type="ChEBI" id="CHEBI:57287"/>
        <dbReference type="ChEBI" id="CHEBI:57288"/>
        <dbReference type="EC" id="2.3.1.9"/>
    </reaction>
    <physiologicalReaction direction="left-to-right" evidence="2">
        <dbReference type="Rhea" id="RHEA:21037"/>
    </physiologicalReaction>
    <physiologicalReaction direction="right-to-left" evidence="2">
        <dbReference type="Rhea" id="RHEA:21038"/>
    </physiologicalReaction>
</comment>
<comment type="catalytic activity">
    <reaction evidence="2">
        <text>propanoyl-CoA + acetyl-CoA = 2-methyl-3-oxobutanoyl-CoA + CoA</text>
        <dbReference type="Rhea" id="RHEA:30719"/>
        <dbReference type="ChEBI" id="CHEBI:57287"/>
        <dbReference type="ChEBI" id="CHEBI:57288"/>
        <dbReference type="ChEBI" id="CHEBI:57335"/>
        <dbReference type="ChEBI" id="CHEBI:57392"/>
    </reaction>
    <physiologicalReaction direction="left-to-right" evidence="2">
        <dbReference type="Rhea" id="RHEA:30720"/>
    </physiologicalReaction>
    <physiologicalReaction direction="right-to-left" evidence="2">
        <dbReference type="Rhea" id="RHEA:30721"/>
    </physiologicalReaction>
</comment>
<comment type="pathway">
    <text evidence="2">Lipid metabolism; fatty acid beta-oxidation.</text>
</comment>
<comment type="subunit">
    <text evidence="2">Homotetramer.</text>
</comment>
<comment type="subcellular location">
    <subcellularLocation>
        <location evidence="2">Mitochondrion</location>
    </subcellularLocation>
</comment>
<comment type="similarity">
    <text evidence="4">Belongs to the thiolase-like superfamily. Thiolase family.</text>
</comment>
<name>THILA_XENLA</name>
<dbReference type="EC" id="2.3.1.9" evidence="2"/>
<dbReference type="EMBL" id="BC068755">
    <property type="protein sequence ID" value="AAH68755.1"/>
    <property type="molecule type" value="mRNA"/>
</dbReference>
<dbReference type="RefSeq" id="NP_001084679.1">
    <property type="nucleotide sequence ID" value="NM_001091210.1"/>
</dbReference>
<dbReference type="SMR" id="Q6NU46"/>
<dbReference type="DNASU" id="414639"/>
<dbReference type="GeneID" id="414639"/>
<dbReference type="KEGG" id="xla:414639"/>
<dbReference type="AGR" id="Xenbase:XB-GENE-977287"/>
<dbReference type="CTD" id="414639"/>
<dbReference type="Xenbase" id="XB-GENE-977287">
    <property type="gene designation" value="acat1.L"/>
</dbReference>
<dbReference type="OrthoDB" id="5404651at2759"/>
<dbReference type="UniPathway" id="UPA00659"/>
<dbReference type="Proteomes" id="UP000186698">
    <property type="component" value="Chromosome 2L"/>
</dbReference>
<dbReference type="Bgee" id="414639">
    <property type="expression patterns" value="Expressed in oocyte and 19 other cell types or tissues"/>
</dbReference>
<dbReference type="GO" id="GO:0005739">
    <property type="term" value="C:mitochondrion"/>
    <property type="evidence" value="ECO:0000318"/>
    <property type="project" value="GO_Central"/>
</dbReference>
<dbReference type="GO" id="GO:0003985">
    <property type="term" value="F:acetyl-CoA C-acetyltransferase activity"/>
    <property type="evidence" value="ECO:0000318"/>
    <property type="project" value="GO_Central"/>
</dbReference>
<dbReference type="GO" id="GO:0046872">
    <property type="term" value="F:metal ion binding"/>
    <property type="evidence" value="ECO:0007669"/>
    <property type="project" value="UniProtKB-KW"/>
</dbReference>
<dbReference type="GO" id="GO:0006635">
    <property type="term" value="P:fatty acid beta-oxidation"/>
    <property type="evidence" value="ECO:0007669"/>
    <property type="project" value="UniProtKB-UniPathway"/>
</dbReference>
<dbReference type="CDD" id="cd00751">
    <property type="entry name" value="thiolase"/>
    <property type="match status" value="1"/>
</dbReference>
<dbReference type="FunFam" id="3.40.47.10:FF:000007">
    <property type="entry name" value="acetyl-CoA acetyltransferase, mitochondrial"/>
    <property type="match status" value="1"/>
</dbReference>
<dbReference type="Gene3D" id="3.40.47.10">
    <property type="match status" value="1"/>
</dbReference>
<dbReference type="InterPro" id="IPR002155">
    <property type="entry name" value="Thiolase"/>
</dbReference>
<dbReference type="InterPro" id="IPR016039">
    <property type="entry name" value="Thiolase-like"/>
</dbReference>
<dbReference type="InterPro" id="IPR020615">
    <property type="entry name" value="Thiolase_acyl_enz_int_AS"/>
</dbReference>
<dbReference type="InterPro" id="IPR020610">
    <property type="entry name" value="Thiolase_AS"/>
</dbReference>
<dbReference type="InterPro" id="IPR020617">
    <property type="entry name" value="Thiolase_C"/>
</dbReference>
<dbReference type="InterPro" id="IPR020613">
    <property type="entry name" value="Thiolase_CS"/>
</dbReference>
<dbReference type="InterPro" id="IPR020616">
    <property type="entry name" value="Thiolase_N"/>
</dbReference>
<dbReference type="NCBIfam" id="TIGR01930">
    <property type="entry name" value="AcCoA-C-Actrans"/>
    <property type="match status" value="1"/>
</dbReference>
<dbReference type="PANTHER" id="PTHR18919:SF156">
    <property type="entry name" value="ACETYL-COA ACETYLTRANSFERASE, MITOCHONDRIAL"/>
    <property type="match status" value="1"/>
</dbReference>
<dbReference type="PANTHER" id="PTHR18919">
    <property type="entry name" value="ACETYL-COA C-ACYLTRANSFERASE"/>
    <property type="match status" value="1"/>
</dbReference>
<dbReference type="Pfam" id="PF02803">
    <property type="entry name" value="Thiolase_C"/>
    <property type="match status" value="1"/>
</dbReference>
<dbReference type="Pfam" id="PF00108">
    <property type="entry name" value="Thiolase_N"/>
    <property type="match status" value="1"/>
</dbReference>
<dbReference type="PIRSF" id="PIRSF000429">
    <property type="entry name" value="Ac-CoA_Ac_transf"/>
    <property type="match status" value="1"/>
</dbReference>
<dbReference type="SUPFAM" id="SSF53901">
    <property type="entry name" value="Thiolase-like"/>
    <property type="match status" value="2"/>
</dbReference>
<dbReference type="PROSITE" id="PS00098">
    <property type="entry name" value="THIOLASE_1"/>
    <property type="match status" value="1"/>
</dbReference>
<dbReference type="PROSITE" id="PS00737">
    <property type="entry name" value="THIOLASE_2"/>
    <property type="match status" value="1"/>
</dbReference>
<dbReference type="PROSITE" id="PS00099">
    <property type="entry name" value="THIOLASE_3"/>
    <property type="match status" value="1"/>
</dbReference>
<organism>
    <name type="scientific">Xenopus laevis</name>
    <name type="common">African clawed frog</name>
    <dbReference type="NCBI Taxonomy" id="8355"/>
    <lineage>
        <taxon>Eukaryota</taxon>
        <taxon>Metazoa</taxon>
        <taxon>Chordata</taxon>
        <taxon>Craniata</taxon>
        <taxon>Vertebrata</taxon>
        <taxon>Euteleostomi</taxon>
        <taxon>Amphibia</taxon>
        <taxon>Batrachia</taxon>
        <taxon>Anura</taxon>
        <taxon>Pipoidea</taxon>
        <taxon>Pipidae</taxon>
        <taxon>Xenopodinae</taxon>
        <taxon>Xenopus</taxon>
        <taxon>Xenopus</taxon>
    </lineage>
</organism>